<feature type="chain" id="PRO_0000386903" description="Ribosomal RNA small subunit methyltransferase H">
    <location>
        <begin position="1"/>
        <end position="325"/>
    </location>
</feature>
<feature type="region of interest" description="Disordered" evidence="2">
    <location>
        <begin position="285"/>
        <end position="325"/>
    </location>
</feature>
<feature type="compositionally biased region" description="Polar residues" evidence="2">
    <location>
        <begin position="315"/>
        <end position="325"/>
    </location>
</feature>
<feature type="binding site" evidence="1">
    <location>
        <begin position="33"/>
        <end position="35"/>
    </location>
    <ligand>
        <name>S-adenosyl-L-methionine</name>
        <dbReference type="ChEBI" id="CHEBI:59789"/>
    </ligand>
</feature>
<feature type="binding site" evidence="1">
    <location>
        <position position="52"/>
    </location>
    <ligand>
        <name>S-adenosyl-L-methionine</name>
        <dbReference type="ChEBI" id="CHEBI:59789"/>
    </ligand>
</feature>
<feature type="binding site" evidence="1">
    <location>
        <position position="87"/>
    </location>
    <ligand>
        <name>S-adenosyl-L-methionine</name>
        <dbReference type="ChEBI" id="CHEBI:59789"/>
    </ligand>
</feature>
<feature type="binding site" evidence="1">
    <location>
        <position position="101"/>
    </location>
    <ligand>
        <name>S-adenosyl-L-methionine</name>
        <dbReference type="ChEBI" id="CHEBI:59789"/>
    </ligand>
</feature>
<feature type="binding site" evidence="1">
    <location>
        <position position="108"/>
    </location>
    <ligand>
        <name>S-adenosyl-L-methionine</name>
        <dbReference type="ChEBI" id="CHEBI:59789"/>
    </ligand>
</feature>
<name>RSMH_FRAAA</name>
<protein>
    <recommendedName>
        <fullName evidence="1">Ribosomal RNA small subunit methyltransferase H</fullName>
        <ecNumber evidence="1">2.1.1.199</ecNumber>
    </recommendedName>
    <alternativeName>
        <fullName evidence="1">16S rRNA m(4)C1402 methyltransferase</fullName>
    </alternativeName>
    <alternativeName>
        <fullName evidence="1">rRNA (cytosine-N(4)-)-methyltransferase RsmH</fullName>
    </alternativeName>
</protein>
<keyword id="KW-0963">Cytoplasm</keyword>
<keyword id="KW-0489">Methyltransferase</keyword>
<keyword id="KW-1185">Reference proteome</keyword>
<keyword id="KW-0698">rRNA processing</keyword>
<keyword id="KW-0949">S-adenosyl-L-methionine</keyword>
<keyword id="KW-0808">Transferase</keyword>
<organism>
    <name type="scientific">Frankia alni (strain DSM 45986 / CECT 9034 / ACN14a)</name>
    <dbReference type="NCBI Taxonomy" id="326424"/>
    <lineage>
        <taxon>Bacteria</taxon>
        <taxon>Bacillati</taxon>
        <taxon>Actinomycetota</taxon>
        <taxon>Actinomycetes</taxon>
        <taxon>Frankiales</taxon>
        <taxon>Frankiaceae</taxon>
        <taxon>Frankia</taxon>
    </lineage>
</organism>
<sequence length="325" mass="34785">MHTPVLTDRVLELLAPALSRPGAVVVDATVGLGGHAAALLAAFPEVRVVGLDRDLDALAHSGERLRALAPERVRLVHAVYDEIGTVLAGLGSARVQGVLFDLGVSSLQLDTDARGFAYSRDAPLDMRMDATRGLTAAEVLNTYDAAALARILRDYGEERFARRIAESVVRARAVEPFTTSARLVDLVRDAIPAPARRTGGNPAKRTFQALRIEVNSELDVLARALPAAFDALAVGGRLVVLSYHSLEDRLVKRELRGYAETLVPPDMPVVPAGAEPRLRWLTRGAEPAGEVEKADNPRAASVRLRAAERTAPNPDRTQPTIGGAS</sequence>
<accession>Q0RNP9</accession>
<evidence type="ECO:0000255" key="1">
    <source>
        <dbReference type="HAMAP-Rule" id="MF_01007"/>
    </source>
</evidence>
<evidence type="ECO:0000256" key="2">
    <source>
        <dbReference type="SAM" id="MobiDB-lite"/>
    </source>
</evidence>
<proteinExistence type="inferred from homology"/>
<dbReference type="EC" id="2.1.1.199" evidence="1"/>
<dbReference type="EMBL" id="CT573213">
    <property type="protein sequence ID" value="CAJ60837.1"/>
    <property type="molecule type" value="Genomic_DNA"/>
</dbReference>
<dbReference type="RefSeq" id="WP_011603353.1">
    <property type="nucleotide sequence ID" value="NC_008278.1"/>
</dbReference>
<dbReference type="SMR" id="Q0RNP9"/>
<dbReference type="STRING" id="326424.FRAAL2188"/>
<dbReference type="KEGG" id="fal:FRAAL2188"/>
<dbReference type="eggNOG" id="COG0275">
    <property type="taxonomic scope" value="Bacteria"/>
</dbReference>
<dbReference type="HOGENOM" id="CLU_038422_0_0_11"/>
<dbReference type="OrthoDB" id="9806637at2"/>
<dbReference type="Proteomes" id="UP000000657">
    <property type="component" value="Chromosome"/>
</dbReference>
<dbReference type="GO" id="GO:0005737">
    <property type="term" value="C:cytoplasm"/>
    <property type="evidence" value="ECO:0007669"/>
    <property type="project" value="UniProtKB-SubCell"/>
</dbReference>
<dbReference type="GO" id="GO:0071424">
    <property type="term" value="F:rRNA (cytosine-N4-)-methyltransferase activity"/>
    <property type="evidence" value="ECO:0007669"/>
    <property type="project" value="UniProtKB-UniRule"/>
</dbReference>
<dbReference type="GO" id="GO:0070475">
    <property type="term" value="P:rRNA base methylation"/>
    <property type="evidence" value="ECO:0007669"/>
    <property type="project" value="UniProtKB-UniRule"/>
</dbReference>
<dbReference type="FunFam" id="1.10.150.170:FF:000001">
    <property type="entry name" value="Ribosomal RNA small subunit methyltransferase H"/>
    <property type="match status" value="1"/>
</dbReference>
<dbReference type="Gene3D" id="1.10.150.170">
    <property type="entry name" value="Putative methyltransferase TM0872, insert domain"/>
    <property type="match status" value="1"/>
</dbReference>
<dbReference type="Gene3D" id="3.40.50.150">
    <property type="entry name" value="Vaccinia Virus protein VP39"/>
    <property type="match status" value="1"/>
</dbReference>
<dbReference type="HAMAP" id="MF_01007">
    <property type="entry name" value="16SrRNA_methyltr_H"/>
    <property type="match status" value="1"/>
</dbReference>
<dbReference type="InterPro" id="IPR002903">
    <property type="entry name" value="RsmH"/>
</dbReference>
<dbReference type="InterPro" id="IPR023397">
    <property type="entry name" value="SAM-dep_MeTrfase_MraW_recog"/>
</dbReference>
<dbReference type="InterPro" id="IPR029063">
    <property type="entry name" value="SAM-dependent_MTases_sf"/>
</dbReference>
<dbReference type="NCBIfam" id="TIGR00006">
    <property type="entry name" value="16S rRNA (cytosine(1402)-N(4))-methyltransferase RsmH"/>
    <property type="match status" value="1"/>
</dbReference>
<dbReference type="PANTHER" id="PTHR11265:SF0">
    <property type="entry name" value="12S RRNA N4-METHYLCYTIDINE METHYLTRANSFERASE"/>
    <property type="match status" value="1"/>
</dbReference>
<dbReference type="PANTHER" id="PTHR11265">
    <property type="entry name" value="S-ADENOSYL-METHYLTRANSFERASE MRAW"/>
    <property type="match status" value="1"/>
</dbReference>
<dbReference type="Pfam" id="PF01795">
    <property type="entry name" value="Methyltransf_5"/>
    <property type="match status" value="1"/>
</dbReference>
<dbReference type="PIRSF" id="PIRSF004486">
    <property type="entry name" value="MraW"/>
    <property type="match status" value="1"/>
</dbReference>
<dbReference type="SUPFAM" id="SSF81799">
    <property type="entry name" value="Putative methyltransferase TM0872, insert domain"/>
    <property type="match status" value="1"/>
</dbReference>
<dbReference type="SUPFAM" id="SSF53335">
    <property type="entry name" value="S-adenosyl-L-methionine-dependent methyltransferases"/>
    <property type="match status" value="1"/>
</dbReference>
<reference key="1">
    <citation type="journal article" date="2007" name="Genome Res.">
        <title>Genome characteristics of facultatively symbiotic Frankia sp. strains reflect host range and host plant biogeography.</title>
        <authorList>
            <person name="Normand P."/>
            <person name="Lapierre P."/>
            <person name="Tisa L.S."/>
            <person name="Gogarten J.P."/>
            <person name="Alloisio N."/>
            <person name="Bagnarol E."/>
            <person name="Bassi C.A."/>
            <person name="Berry A.M."/>
            <person name="Bickhart D.M."/>
            <person name="Choisne N."/>
            <person name="Couloux A."/>
            <person name="Cournoyer B."/>
            <person name="Cruveiller S."/>
            <person name="Daubin V."/>
            <person name="Demange N."/>
            <person name="Francino M.P."/>
            <person name="Goltsman E."/>
            <person name="Huang Y."/>
            <person name="Kopp O.R."/>
            <person name="Labarre L."/>
            <person name="Lapidus A."/>
            <person name="Lavire C."/>
            <person name="Marechal J."/>
            <person name="Martinez M."/>
            <person name="Mastronunzio J.E."/>
            <person name="Mullin B.C."/>
            <person name="Niemann J."/>
            <person name="Pujic P."/>
            <person name="Rawnsley T."/>
            <person name="Rouy Z."/>
            <person name="Schenowitz C."/>
            <person name="Sellstedt A."/>
            <person name="Tavares F."/>
            <person name="Tomkins J.P."/>
            <person name="Vallenet D."/>
            <person name="Valverde C."/>
            <person name="Wall L.G."/>
            <person name="Wang Y."/>
            <person name="Medigue C."/>
            <person name="Benson D.R."/>
        </authorList>
    </citation>
    <scope>NUCLEOTIDE SEQUENCE [LARGE SCALE GENOMIC DNA]</scope>
    <source>
        <strain>DSM 45986 / CECT 9034 / ACN14a</strain>
    </source>
</reference>
<gene>
    <name evidence="1" type="primary">rsmH</name>
    <name type="synonym">mraW</name>
    <name type="ordered locus">FRAAL2188</name>
</gene>
<comment type="function">
    <text evidence="1">Specifically methylates the N4 position of cytidine in position 1402 (C1402) of 16S rRNA.</text>
</comment>
<comment type="catalytic activity">
    <reaction evidence="1">
        <text>cytidine(1402) in 16S rRNA + S-adenosyl-L-methionine = N(4)-methylcytidine(1402) in 16S rRNA + S-adenosyl-L-homocysteine + H(+)</text>
        <dbReference type="Rhea" id="RHEA:42928"/>
        <dbReference type="Rhea" id="RHEA-COMP:10286"/>
        <dbReference type="Rhea" id="RHEA-COMP:10287"/>
        <dbReference type="ChEBI" id="CHEBI:15378"/>
        <dbReference type="ChEBI" id="CHEBI:57856"/>
        <dbReference type="ChEBI" id="CHEBI:59789"/>
        <dbReference type="ChEBI" id="CHEBI:74506"/>
        <dbReference type="ChEBI" id="CHEBI:82748"/>
        <dbReference type="EC" id="2.1.1.199"/>
    </reaction>
</comment>
<comment type="subcellular location">
    <subcellularLocation>
        <location evidence="1">Cytoplasm</location>
    </subcellularLocation>
</comment>
<comment type="similarity">
    <text evidence="1">Belongs to the methyltransferase superfamily. RsmH family.</text>
</comment>